<protein>
    <recommendedName>
        <fullName evidence="1">Cobalt transport protein CbiM 2</fullName>
    </recommendedName>
    <alternativeName>
        <fullName evidence="1">Energy-coupling factor transporter probable substrate-capture protein CbiM 2</fullName>
        <shortName evidence="1">ECF transporter S component CbiM 2</shortName>
    </alternativeName>
</protein>
<organism>
    <name type="scientific">Pelobacter propionicus (strain DSM 2379 / NBRC 103807 / OttBd1)</name>
    <dbReference type="NCBI Taxonomy" id="338966"/>
    <lineage>
        <taxon>Bacteria</taxon>
        <taxon>Pseudomonadati</taxon>
        <taxon>Thermodesulfobacteriota</taxon>
        <taxon>Desulfuromonadia</taxon>
        <taxon>Desulfuromonadales</taxon>
        <taxon>Desulfuromonadaceae</taxon>
        <taxon>Pelobacter</taxon>
    </lineage>
</organism>
<keyword id="KW-0997">Cell inner membrane</keyword>
<keyword id="KW-1003">Cell membrane</keyword>
<keyword id="KW-0169">Cobalamin biosynthesis</keyword>
<keyword id="KW-0170">Cobalt</keyword>
<keyword id="KW-0171">Cobalt transport</keyword>
<keyword id="KW-0406">Ion transport</keyword>
<keyword id="KW-0472">Membrane</keyword>
<keyword id="KW-1185">Reference proteome</keyword>
<keyword id="KW-0812">Transmembrane</keyword>
<keyword id="KW-1133">Transmembrane helix</keyword>
<keyword id="KW-0813">Transport</keyword>
<evidence type="ECO:0000255" key="1">
    <source>
        <dbReference type="HAMAP-Rule" id="MF_01462"/>
    </source>
</evidence>
<comment type="function">
    <text evidence="1">Part of the energy-coupling factor (ECF) transporter complex CbiMNOQ involved in cobalt import.</text>
</comment>
<comment type="pathway">
    <text evidence="1">Cofactor biosynthesis; adenosylcobalamin biosynthesis.</text>
</comment>
<comment type="subunit">
    <text evidence="1">Forms an energy-coupling factor (ECF) transporter complex composed of an ATP-binding protein (A component, CbiO), a transmembrane protein (T component, CbiQ) and 2 possible substrate-capture proteins (S components, CbiM and CbiN) of unknown stoichimetry.</text>
</comment>
<comment type="subcellular location">
    <subcellularLocation>
        <location evidence="1">Cell inner membrane</location>
        <topology evidence="1">Multi-pass membrane protein</topology>
    </subcellularLocation>
</comment>
<comment type="similarity">
    <text evidence="1">Belongs to the CbiM family.</text>
</comment>
<accession>A1ANE2</accession>
<feature type="chain" id="PRO_0000411145" description="Cobalt transport protein CbiM 2">
    <location>
        <begin position="1"/>
        <end position="226"/>
    </location>
</feature>
<feature type="transmembrane region" description="Helical" evidence="1">
    <location>
        <begin position="6"/>
        <end position="26"/>
    </location>
</feature>
<feature type="transmembrane region" description="Helical" evidence="1">
    <location>
        <begin position="43"/>
        <end position="63"/>
    </location>
</feature>
<feature type="transmembrane region" description="Helical" evidence="1">
    <location>
        <begin position="75"/>
        <end position="95"/>
    </location>
</feature>
<feature type="transmembrane region" description="Helical" evidence="1">
    <location>
        <begin position="107"/>
        <end position="127"/>
    </location>
</feature>
<feature type="transmembrane region" description="Helical" evidence="1">
    <location>
        <begin position="135"/>
        <end position="155"/>
    </location>
</feature>
<feature type="transmembrane region" description="Helical" evidence="1">
    <location>
        <begin position="181"/>
        <end position="201"/>
    </location>
</feature>
<name>CBIM2_PELPD</name>
<sequence>MHIMEGFLPVEHAIGWSVASAPVVAYGLYSINKKIKKNPEQRMLLGVAAAFTFVLSALKMPSVTGSCSHPTGTGLGAILFGPSAVAPIGAVVLLFQALLLAHGGLTTLGANIFSMAIVGPFAAAAVFRLARAARFPFGVGVFLAASLGDLLTYVTTACQLAFAFPDPVGGFTASLAKFAGVFALTQIPLAISEGLLTVVVMNALLRFNREELGSLNIEGNGQEVQA</sequence>
<reference key="1">
    <citation type="submission" date="2006-10" db="EMBL/GenBank/DDBJ databases">
        <title>Complete sequence of chromosome of Pelobacter propionicus DSM 2379.</title>
        <authorList>
            <consortium name="US DOE Joint Genome Institute"/>
            <person name="Copeland A."/>
            <person name="Lucas S."/>
            <person name="Lapidus A."/>
            <person name="Barry K."/>
            <person name="Detter J.C."/>
            <person name="Glavina del Rio T."/>
            <person name="Hammon N."/>
            <person name="Israni S."/>
            <person name="Dalin E."/>
            <person name="Tice H."/>
            <person name="Pitluck S."/>
            <person name="Saunders E."/>
            <person name="Brettin T."/>
            <person name="Bruce D."/>
            <person name="Han C."/>
            <person name="Tapia R."/>
            <person name="Schmutz J."/>
            <person name="Larimer F."/>
            <person name="Land M."/>
            <person name="Hauser L."/>
            <person name="Kyrpides N."/>
            <person name="Kim E."/>
            <person name="Lovley D."/>
            <person name="Richardson P."/>
        </authorList>
    </citation>
    <scope>NUCLEOTIDE SEQUENCE [LARGE SCALE GENOMIC DNA]</scope>
    <source>
        <strain>DSM 2379 / NBRC 103807 / OttBd1</strain>
    </source>
</reference>
<dbReference type="EMBL" id="CP000482">
    <property type="protein sequence ID" value="ABK98862.1"/>
    <property type="molecule type" value="Genomic_DNA"/>
</dbReference>
<dbReference type="RefSeq" id="WP_011735164.1">
    <property type="nucleotide sequence ID" value="NC_008609.1"/>
</dbReference>
<dbReference type="SMR" id="A1ANE2"/>
<dbReference type="STRING" id="338966.Ppro_1241"/>
<dbReference type="KEGG" id="ppd:Ppro_1241"/>
<dbReference type="eggNOG" id="COG0310">
    <property type="taxonomic scope" value="Bacteria"/>
</dbReference>
<dbReference type="HOGENOM" id="CLU_052508_3_0_7"/>
<dbReference type="OrthoDB" id="9809846at2"/>
<dbReference type="UniPathway" id="UPA00148"/>
<dbReference type="Proteomes" id="UP000006732">
    <property type="component" value="Chromosome"/>
</dbReference>
<dbReference type="GO" id="GO:0043190">
    <property type="term" value="C:ATP-binding cassette (ABC) transporter complex"/>
    <property type="evidence" value="ECO:0007669"/>
    <property type="project" value="InterPro"/>
</dbReference>
<dbReference type="GO" id="GO:0015087">
    <property type="term" value="F:cobalt ion transmembrane transporter activity"/>
    <property type="evidence" value="ECO:0007669"/>
    <property type="project" value="UniProtKB-UniRule"/>
</dbReference>
<dbReference type="GO" id="GO:0009236">
    <property type="term" value="P:cobalamin biosynthetic process"/>
    <property type="evidence" value="ECO:0007669"/>
    <property type="project" value="UniProtKB-UniRule"/>
</dbReference>
<dbReference type="FunFam" id="1.10.1760.20:FF:000001">
    <property type="entry name" value="Cobalt transport protein CbiM"/>
    <property type="match status" value="1"/>
</dbReference>
<dbReference type="Gene3D" id="1.10.1760.20">
    <property type="match status" value="1"/>
</dbReference>
<dbReference type="HAMAP" id="MF_01462">
    <property type="entry name" value="CbiM"/>
    <property type="match status" value="1"/>
</dbReference>
<dbReference type="InterPro" id="IPR018024">
    <property type="entry name" value="CbiM"/>
</dbReference>
<dbReference type="InterPro" id="IPR002751">
    <property type="entry name" value="CbiM/NikMN"/>
</dbReference>
<dbReference type="NCBIfam" id="TIGR00123">
    <property type="entry name" value="cbiM"/>
    <property type="match status" value="1"/>
</dbReference>
<dbReference type="NCBIfam" id="NF006184">
    <property type="entry name" value="PRK08319.1"/>
    <property type="match status" value="1"/>
</dbReference>
<dbReference type="PANTHER" id="PTHR43627">
    <property type="match status" value="1"/>
</dbReference>
<dbReference type="PANTHER" id="PTHR43627:SF1">
    <property type="entry name" value="COBALT TRANSPORT PROTEIN CBIM"/>
    <property type="match status" value="1"/>
</dbReference>
<dbReference type="Pfam" id="PF01891">
    <property type="entry name" value="CbiM"/>
    <property type="match status" value="1"/>
</dbReference>
<proteinExistence type="inferred from homology"/>
<gene>
    <name evidence="1" type="primary">cbiM2</name>
    <name type="ordered locus">Ppro_1241</name>
</gene>